<protein>
    <recommendedName>
        <fullName evidence="1">Cyclin-dependent kinase inhibitor 3</fullName>
        <ecNumber>3.1.3.16</ecNumber>
        <ecNumber>3.1.3.48</ecNumber>
    </recommendedName>
    <alternativeName>
        <fullName evidence="1">CDK2-associated dual-specificity phosphatase</fullName>
    </alternativeName>
    <alternativeName>
        <fullName evidence="1">Kinase-associated phosphatase</fullName>
    </alternativeName>
</protein>
<name>CDKN3_RAT</name>
<feature type="chain" id="PRO_0000396639" description="Cyclin-dependent kinase inhibitor 3">
    <location>
        <begin position="1"/>
        <end position="212"/>
    </location>
</feature>
<feature type="domain" description="Tyrosine-protein phosphatase" evidence="3">
    <location>
        <begin position="32"/>
        <end position="201"/>
    </location>
</feature>
<feature type="region of interest" description="Interaction with CDK2" evidence="1">
    <location>
        <begin position="1"/>
        <end position="34"/>
    </location>
</feature>
<feature type="region of interest" description="Disordered" evidence="4">
    <location>
        <begin position="1"/>
        <end position="24"/>
    </location>
</feature>
<feature type="compositionally biased region" description="Acidic residues" evidence="4">
    <location>
        <begin position="13"/>
        <end position="24"/>
    </location>
</feature>
<feature type="active site" description="Phosphocysteine intermediate" evidence="3">
    <location>
        <position position="140"/>
    </location>
</feature>
<evidence type="ECO:0000250" key="1">
    <source>
        <dbReference type="UniProtKB" id="Q16667"/>
    </source>
</evidence>
<evidence type="ECO:0000255" key="2"/>
<evidence type="ECO:0000255" key="3">
    <source>
        <dbReference type="PROSITE-ProRule" id="PRU00160"/>
    </source>
</evidence>
<evidence type="ECO:0000256" key="4">
    <source>
        <dbReference type="SAM" id="MobiDB-lite"/>
    </source>
</evidence>
<evidence type="ECO:0000269" key="5">
    <source>
    </source>
</evidence>
<evidence type="ECO:0000312" key="6">
    <source>
        <dbReference type="EMBL" id="AAI67026.1"/>
    </source>
</evidence>
<evidence type="ECO:0000312" key="7">
    <source>
        <dbReference type="EMBL" id="EDL88327.1"/>
    </source>
</evidence>
<evidence type="ECO:0000312" key="8">
    <source>
        <dbReference type="RGD" id="1307781"/>
    </source>
</evidence>
<dbReference type="EC" id="3.1.3.16"/>
<dbReference type="EC" id="3.1.3.48"/>
<dbReference type="EMBL" id="CH474040">
    <property type="protein sequence ID" value="EDL88327.1"/>
    <property type="molecule type" value="Genomic_DNA"/>
</dbReference>
<dbReference type="EMBL" id="BC167026">
    <property type="protein sequence ID" value="AAI67026.1"/>
    <property type="molecule type" value="mRNA"/>
</dbReference>
<dbReference type="RefSeq" id="NP_001387969.1">
    <property type="nucleotide sequence ID" value="NM_001401040.1"/>
</dbReference>
<dbReference type="RefSeq" id="XP_006251853.1">
    <property type="nucleotide sequence ID" value="XM_006251791.3"/>
</dbReference>
<dbReference type="SMR" id="B2RZ50"/>
<dbReference type="FunCoup" id="B2RZ50">
    <property type="interactions" value="198"/>
</dbReference>
<dbReference type="STRING" id="10116.ENSRNOP00000012985"/>
<dbReference type="GlyGen" id="B2RZ50">
    <property type="glycosylation" value="1 site"/>
</dbReference>
<dbReference type="PhosphoSitePlus" id="B2RZ50"/>
<dbReference type="PaxDb" id="10116-ENSRNOP00000012985"/>
<dbReference type="Ensembl" id="ENSRNOT00000012985.7">
    <property type="protein sequence ID" value="ENSRNOP00000012985.5"/>
    <property type="gene ID" value="ENSRNOG00000009785.7"/>
</dbReference>
<dbReference type="GeneID" id="289993"/>
<dbReference type="AGR" id="RGD:1307781"/>
<dbReference type="RGD" id="1307781">
    <property type="gene designation" value="Cdkn3"/>
</dbReference>
<dbReference type="eggNOG" id="KOG1720">
    <property type="taxonomic scope" value="Eukaryota"/>
</dbReference>
<dbReference type="GeneTree" id="ENSGT00390000004717"/>
<dbReference type="HOGENOM" id="CLU_047330_1_0_1"/>
<dbReference type="InParanoid" id="B2RZ50"/>
<dbReference type="PhylomeDB" id="B2RZ50"/>
<dbReference type="TreeFam" id="TF101040"/>
<dbReference type="PRO" id="PR:B2RZ50"/>
<dbReference type="Proteomes" id="UP000002494">
    <property type="component" value="Chromosome 15"/>
</dbReference>
<dbReference type="Proteomes" id="UP000234681">
    <property type="component" value="Chromosome 15"/>
</dbReference>
<dbReference type="Bgee" id="ENSRNOG00000009785">
    <property type="expression patterns" value="Expressed in testis and 18 other cell types or tissues"/>
</dbReference>
<dbReference type="GO" id="GO:0005737">
    <property type="term" value="C:cytoplasm"/>
    <property type="evidence" value="ECO:0000318"/>
    <property type="project" value="GO_Central"/>
</dbReference>
<dbReference type="GO" id="GO:0005829">
    <property type="term" value="C:cytosol"/>
    <property type="evidence" value="ECO:0007669"/>
    <property type="project" value="Ensembl"/>
</dbReference>
<dbReference type="GO" id="GO:0005634">
    <property type="term" value="C:nucleus"/>
    <property type="evidence" value="ECO:0000318"/>
    <property type="project" value="GO_Central"/>
</dbReference>
<dbReference type="GO" id="GO:0048471">
    <property type="term" value="C:perinuclear region of cytoplasm"/>
    <property type="evidence" value="ECO:0000250"/>
    <property type="project" value="UniProtKB"/>
</dbReference>
<dbReference type="GO" id="GO:0004722">
    <property type="term" value="F:protein serine/threonine phosphatase activity"/>
    <property type="evidence" value="ECO:0000266"/>
    <property type="project" value="RGD"/>
</dbReference>
<dbReference type="GO" id="GO:0004725">
    <property type="term" value="F:protein tyrosine phosphatase activity"/>
    <property type="evidence" value="ECO:0000266"/>
    <property type="project" value="RGD"/>
</dbReference>
<dbReference type="GO" id="GO:0051726">
    <property type="term" value="P:regulation of cell cycle"/>
    <property type="evidence" value="ECO:0000266"/>
    <property type="project" value="RGD"/>
</dbReference>
<dbReference type="CDD" id="cd14505">
    <property type="entry name" value="CDKN3-like"/>
    <property type="match status" value="1"/>
</dbReference>
<dbReference type="FunFam" id="3.90.190.10:FF:000046">
    <property type="entry name" value="Cyclin-dependent kinase inhibitor 3"/>
    <property type="match status" value="1"/>
</dbReference>
<dbReference type="Gene3D" id="3.90.190.10">
    <property type="entry name" value="Protein tyrosine phosphatase superfamily"/>
    <property type="match status" value="1"/>
</dbReference>
<dbReference type="InterPro" id="IPR008425">
    <property type="entry name" value="CDK_inhib_3"/>
</dbReference>
<dbReference type="InterPro" id="IPR022778">
    <property type="entry name" value="CDKN3"/>
</dbReference>
<dbReference type="InterPro" id="IPR029021">
    <property type="entry name" value="Prot-tyrosine_phosphatase-like"/>
</dbReference>
<dbReference type="InterPro" id="IPR050561">
    <property type="entry name" value="PTP"/>
</dbReference>
<dbReference type="InterPro" id="IPR003595">
    <property type="entry name" value="Tyr_Pase_cat"/>
</dbReference>
<dbReference type="InterPro" id="IPR000387">
    <property type="entry name" value="Tyr_Pase_dom"/>
</dbReference>
<dbReference type="InterPro" id="IPR020422">
    <property type="entry name" value="TYR_PHOSPHATASE_DUAL_dom"/>
</dbReference>
<dbReference type="PANTHER" id="PTHR23339">
    <property type="entry name" value="TYROSINE SPECIFIC PROTEIN PHOSPHATASE AND DUAL SPECIFICITY PROTEIN PHOSPHATASE"/>
    <property type="match status" value="1"/>
</dbReference>
<dbReference type="Pfam" id="PF05706">
    <property type="entry name" value="CDKN3"/>
    <property type="match status" value="1"/>
</dbReference>
<dbReference type="PIRSF" id="PIRSF037322">
    <property type="entry name" value="CDKN3"/>
    <property type="match status" value="1"/>
</dbReference>
<dbReference type="SMART" id="SM00404">
    <property type="entry name" value="PTPc_motif"/>
    <property type="match status" value="1"/>
</dbReference>
<dbReference type="SUPFAM" id="SSF52799">
    <property type="entry name" value="(Phosphotyrosine protein) phosphatases II"/>
    <property type="match status" value="1"/>
</dbReference>
<dbReference type="PROSITE" id="PS50056">
    <property type="entry name" value="TYR_PHOSPHATASE_2"/>
    <property type="match status" value="1"/>
</dbReference>
<dbReference type="PROSITE" id="PS50054">
    <property type="entry name" value="TYR_PHOSPHATASE_DUAL"/>
    <property type="match status" value="1"/>
</dbReference>
<comment type="function">
    <text evidence="1">May play a role in cell cycle regulation. Dual specificity phosphatase active toward substrates containing either phosphotyrosine or phosphoserine residues. Dephosphorylates CDK2 at 'Thr-160' in a cyclin-dependent manner (By similarity).</text>
</comment>
<comment type="catalytic activity">
    <reaction evidence="1">
        <text>O-phospho-L-tyrosyl-[protein] + H2O = L-tyrosyl-[protein] + phosphate</text>
        <dbReference type="Rhea" id="RHEA:10684"/>
        <dbReference type="Rhea" id="RHEA-COMP:10136"/>
        <dbReference type="Rhea" id="RHEA-COMP:20101"/>
        <dbReference type="ChEBI" id="CHEBI:15377"/>
        <dbReference type="ChEBI" id="CHEBI:43474"/>
        <dbReference type="ChEBI" id="CHEBI:46858"/>
        <dbReference type="ChEBI" id="CHEBI:61978"/>
        <dbReference type="EC" id="3.1.3.48"/>
    </reaction>
</comment>
<comment type="catalytic activity">
    <reaction>
        <text>O-phospho-L-seryl-[protein] + H2O = L-seryl-[protein] + phosphate</text>
        <dbReference type="Rhea" id="RHEA:20629"/>
        <dbReference type="Rhea" id="RHEA-COMP:9863"/>
        <dbReference type="Rhea" id="RHEA-COMP:11604"/>
        <dbReference type="ChEBI" id="CHEBI:15377"/>
        <dbReference type="ChEBI" id="CHEBI:29999"/>
        <dbReference type="ChEBI" id="CHEBI:43474"/>
        <dbReference type="ChEBI" id="CHEBI:83421"/>
        <dbReference type="EC" id="3.1.3.16"/>
    </reaction>
</comment>
<comment type="catalytic activity">
    <reaction>
        <text>O-phospho-L-threonyl-[protein] + H2O = L-threonyl-[protein] + phosphate</text>
        <dbReference type="Rhea" id="RHEA:47004"/>
        <dbReference type="Rhea" id="RHEA-COMP:11060"/>
        <dbReference type="Rhea" id="RHEA-COMP:11605"/>
        <dbReference type="ChEBI" id="CHEBI:15377"/>
        <dbReference type="ChEBI" id="CHEBI:30013"/>
        <dbReference type="ChEBI" id="CHEBI:43474"/>
        <dbReference type="ChEBI" id="CHEBI:61977"/>
        <dbReference type="EC" id="3.1.3.16"/>
    </reaction>
</comment>
<comment type="subunit">
    <text evidence="1">Interacts with cyclin-dependent kinases such as CDK1, CDK2 and CDK3. Does not interact with CDK4. Interacts (via C-terminus) with phosphorylated CDK2 (via C-terminal helix). Interacts with MS4A3 (via C-terminus); the interaction enhances CDKN3 enzymatic activity (By similarity).</text>
</comment>
<comment type="subcellular location">
    <subcellularLocation>
        <location evidence="1">Cytoplasm</location>
        <location evidence="1">Perinuclear region</location>
    </subcellularLocation>
</comment>
<comment type="similarity">
    <text evidence="2">Belongs to the protein-tyrosine phosphatase family.</text>
</comment>
<sequence>MKPPISIQASEFDSSDEEPADDEQTPIQISWLPLSRVNCSQFLGLCALPGCKFKDVRRNIQKDTEELKSSGIQDVFVFCTRGELSKYRVPNLLDLYQQYGIVTHHHPIPDGGTPDIGSCWEIMEELATCLKNNRKTLIHCYGGLGRSCLVAACLLLYLSDSISPQQAIDSLRDVRGSGAIQTIKQYNYLHEFRDKLAAYLSSRDSLSRSVSR</sequence>
<keyword id="KW-0131">Cell cycle</keyword>
<keyword id="KW-0963">Cytoplasm</keyword>
<keyword id="KW-0378">Hydrolase</keyword>
<keyword id="KW-0904">Protein phosphatase</keyword>
<keyword id="KW-1185">Reference proteome</keyword>
<organism>
    <name type="scientific">Rattus norvegicus</name>
    <name type="common">Rat</name>
    <dbReference type="NCBI Taxonomy" id="10116"/>
    <lineage>
        <taxon>Eukaryota</taxon>
        <taxon>Metazoa</taxon>
        <taxon>Chordata</taxon>
        <taxon>Craniata</taxon>
        <taxon>Vertebrata</taxon>
        <taxon>Euteleostomi</taxon>
        <taxon>Mammalia</taxon>
        <taxon>Eutheria</taxon>
        <taxon>Euarchontoglires</taxon>
        <taxon>Glires</taxon>
        <taxon>Rodentia</taxon>
        <taxon>Myomorpha</taxon>
        <taxon>Muroidea</taxon>
        <taxon>Muridae</taxon>
        <taxon>Murinae</taxon>
        <taxon>Rattus</taxon>
    </lineage>
</organism>
<accession>B2RZ50</accession>
<gene>
    <name evidence="6 8" type="primary">Cdkn3</name>
    <name evidence="1" type="synonym">Kap</name>
</gene>
<reference evidence="7" key="1">
    <citation type="submission" date="2005-07" db="EMBL/GenBank/DDBJ databases">
        <authorList>
            <person name="Mural R.J."/>
            <person name="Adams M.D."/>
            <person name="Myers E.W."/>
            <person name="Smith H.O."/>
            <person name="Venter J.C."/>
        </authorList>
    </citation>
    <scope>NUCLEOTIDE SEQUENCE [LARGE SCALE GENOMIC DNA]</scope>
    <source>
        <strain evidence="7">Brown Norway</strain>
    </source>
</reference>
<reference evidence="6" key="2">
    <citation type="journal article" date="2004" name="Genome Res.">
        <title>The status, quality, and expansion of the NIH full-length cDNA project: the Mammalian Gene Collection (MGC).</title>
        <authorList>
            <consortium name="The MGC Project Team"/>
        </authorList>
    </citation>
    <scope>NUCLEOTIDE SEQUENCE [LARGE SCALE MRNA]</scope>
    <source>
        <strain evidence="5">Brown Norway/NHsdMcwi</strain>
        <tissue evidence="6">Embryonic liver</tissue>
    </source>
</reference>
<proteinExistence type="evidence at transcript level"/>